<name>TLP_CLOBM</name>
<accession>B1KYP3</accession>
<gene>
    <name evidence="1" type="primary">tlp</name>
    <name type="ordered locus">CLK_0479</name>
</gene>
<proteinExistence type="inferred from homology"/>
<organism>
    <name type="scientific">Clostridium botulinum (strain Loch Maree / Type A3)</name>
    <dbReference type="NCBI Taxonomy" id="498214"/>
    <lineage>
        <taxon>Bacteria</taxon>
        <taxon>Bacillati</taxon>
        <taxon>Bacillota</taxon>
        <taxon>Clostridia</taxon>
        <taxon>Eubacteriales</taxon>
        <taxon>Clostridiaceae</taxon>
        <taxon>Clostridium</taxon>
    </lineage>
</organism>
<evidence type="ECO:0000255" key="1">
    <source>
        <dbReference type="HAMAP-Rule" id="MF_01506"/>
    </source>
</evidence>
<evidence type="ECO:0000256" key="2">
    <source>
        <dbReference type="SAM" id="MobiDB-lite"/>
    </source>
</evidence>
<feature type="chain" id="PRO_1000196951" description="Protein Tlp homolog">
    <location>
        <begin position="1"/>
        <end position="75"/>
    </location>
</feature>
<feature type="region of interest" description="Disordered" evidence="2">
    <location>
        <begin position="48"/>
        <end position="75"/>
    </location>
</feature>
<dbReference type="EMBL" id="CP000962">
    <property type="protein sequence ID" value="ACA55559.1"/>
    <property type="molecule type" value="Genomic_DNA"/>
</dbReference>
<dbReference type="RefSeq" id="WP_003360992.1">
    <property type="nucleotide sequence ID" value="NC_010520.1"/>
</dbReference>
<dbReference type="SMR" id="B1KYP3"/>
<dbReference type="KEGG" id="cbl:CLK_0479"/>
<dbReference type="HOGENOM" id="CLU_178266_1_1_9"/>
<dbReference type="HAMAP" id="MF_01506">
    <property type="entry name" value="Tlp"/>
    <property type="match status" value="1"/>
</dbReference>
<dbReference type="InterPro" id="IPR017524">
    <property type="entry name" value="SASP_thioredoxin-like"/>
</dbReference>
<dbReference type="NCBIfam" id="TIGR03090">
    <property type="entry name" value="SASP_tlp"/>
    <property type="match status" value="1"/>
</dbReference>
<dbReference type="Pfam" id="PF19824">
    <property type="entry name" value="Tlp"/>
    <property type="match status" value="1"/>
</dbReference>
<comment type="similarity">
    <text evidence="1">Belongs to the Tlp family.</text>
</comment>
<protein>
    <recommendedName>
        <fullName evidence="1">Protein Tlp homolog</fullName>
    </recommendedName>
</protein>
<sequence length="75" mass="8975">MKNKPDDRRDNVDKIQYNITKTIQNCELADEMIAKTDDEKTKKTLIEKNQRRREALDGMREEIKDEARDKKNGYM</sequence>
<reference key="1">
    <citation type="journal article" date="2007" name="PLoS ONE">
        <title>Analysis of the neurotoxin complex genes in Clostridium botulinum A1-A4 and B1 strains: BoNT/A3, /Ba4 and /B1 clusters are located within plasmids.</title>
        <authorList>
            <person name="Smith T.J."/>
            <person name="Hill K.K."/>
            <person name="Foley B.T."/>
            <person name="Detter J.C."/>
            <person name="Munk A.C."/>
            <person name="Bruce D.C."/>
            <person name="Doggett N.A."/>
            <person name="Smith L.A."/>
            <person name="Marks J.D."/>
            <person name="Xie G."/>
            <person name="Brettin T.S."/>
        </authorList>
    </citation>
    <scope>NUCLEOTIDE SEQUENCE [LARGE SCALE GENOMIC DNA]</scope>
    <source>
        <strain>Loch Maree / Type A3</strain>
    </source>
</reference>